<name>CCMA_BARHE</name>
<comment type="function">
    <text evidence="1">Part of the ABC transporter complex CcmAB involved in the biogenesis of c-type cytochromes; once thought to export heme, this seems not to be the case, but its exact role is uncertain. Responsible for energy coupling to the transport system.</text>
</comment>
<comment type="catalytic activity">
    <reaction evidence="1">
        <text>heme b(in) + ATP + H2O = heme b(out) + ADP + phosphate + H(+)</text>
        <dbReference type="Rhea" id="RHEA:19261"/>
        <dbReference type="ChEBI" id="CHEBI:15377"/>
        <dbReference type="ChEBI" id="CHEBI:15378"/>
        <dbReference type="ChEBI" id="CHEBI:30616"/>
        <dbReference type="ChEBI" id="CHEBI:43474"/>
        <dbReference type="ChEBI" id="CHEBI:60344"/>
        <dbReference type="ChEBI" id="CHEBI:456216"/>
        <dbReference type="EC" id="7.6.2.5"/>
    </reaction>
</comment>
<comment type="subunit">
    <text evidence="1">The complex is composed of two ATP-binding proteins (CcmA) and two transmembrane proteins (CcmB).</text>
</comment>
<comment type="subcellular location">
    <subcellularLocation>
        <location evidence="1">Cell inner membrane</location>
        <topology evidence="1">Peripheral membrane protein</topology>
    </subcellularLocation>
</comment>
<comment type="similarity">
    <text evidence="1">Belongs to the ABC transporter superfamily. CcmA exporter (TC 3.A.1.107) family.</text>
</comment>
<proteinExistence type="inferred from homology"/>
<gene>
    <name evidence="1" type="primary">ccmA</name>
    <name type="ordered locus">BH01150</name>
</gene>
<dbReference type="EC" id="7.6.2.5" evidence="1"/>
<dbReference type="EMBL" id="BX897699">
    <property type="protein sequence ID" value="CAF26930.1"/>
    <property type="molecule type" value="Genomic_DNA"/>
</dbReference>
<dbReference type="RefSeq" id="WP_011180072.1">
    <property type="nucleotide sequence ID" value="NZ_LRIJ02000001.1"/>
</dbReference>
<dbReference type="SMR" id="Q6G529"/>
<dbReference type="PaxDb" id="283166-BH01150"/>
<dbReference type="EnsemblBacteria" id="CAF26930">
    <property type="protein sequence ID" value="CAF26930"/>
    <property type="gene ID" value="BH01150"/>
</dbReference>
<dbReference type="GeneID" id="92986398"/>
<dbReference type="KEGG" id="bhe:BH01150"/>
<dbReference type="eggNOG" id="COG4133">
    <property type="taxonomic scope" value="Bacteria"/>
</dbReference>
<dbReference type="OrthoDB" id="9800654at2"/>
<dbReference type="Proteomes" id="UP000000421">
    <property type="component" value="Chromosome"/>
</dbReference>
<dbReference type="GO" id="GO:0005886">
    <property type="term" value="C:plasma membrane"/>
    <property type="evidence" value="ECO:0007669"/>
    <property type="project" value="UniProtKB-SubCell"/>
</dbReference>
<dbReference type="GO" id="GO:0015439">
    <property type="term" value="F:ABC-type heme transporter activity"/>
    <property type="evidence" value="ECO:0007669"/>
    <property type="project" value="UniProtKB-EC"/>
</dbReference>
<dbReference type="GO" id="GO:0005524">
    <property type="term" value="F:ATP binding"/>
    <property type="evidence" value="ECO:0007669"/>
    <property type="project" value="UniProtKB-KW"/>
</dbReference>
<dbReference type="GO" id="GO:0016887">
    <property type="term" value="F:ATP hydrolysis activity"/>
    <property type="evidence" value="ECO:0007669"/>
    <property type="project" value="InterPro"/>
</dbReference>
<dbReference type="GO" id="GO:0017004">
    <property type="term" value="P:cytochrome complex assembly"/>
    <property type="evidence" value="ECO:0007669"/>
    <property type="project" value="UniProtKB-KW"/>
</dbReference>
<dbReference type="Gene3D" id="3.40.50.300">
    <property type="entry name" value="P-loop containing nucleotide triphosphate hydrolases"/>
    <property type="match status" value="1"/>
</dbReference>
<dbReference type="InterPro" id="IPR003593">
    <property type="entry name" value="AAA+_ATPase"/>
</dbReference>
<dbReference type="InterPro" id="IPR003439">
    <property type="entry name" value="ABC_transporter-like_ATP-bd"/>
</dbReference>
<dbReference type="InterPro" id="IPR005895">
    <property type="entry name" value="ABC_transptr_haem_export_CcmA"/>
</dbReference>
<dbReference type="InterPro" id="IPR027417">
    <property type="entry name" value="P-loop_NTPase"/>
</dbReference>
<dbReference type="NCBIfam" id="TIGR01189">
    <property type="entry name" value="ccmA"/>
    <property type="match status" value="1"/>
</dbReference>
<dbReference type="PANTHER" id="PTHR43499">
    <property type="entry name" value="ABC TRANSPORTER I FAMILY MEMBER 1"/>
    <property type="match status" value="1"/>
</dbReference>
<dbReference type="PANTHER" id="PTHR43499:SF1">
    <property type="entry name" value="ABC TRANSPORTER I FAMILY MEMBER 1"/>
    <property type="match status" value="1"/>
</dbReference>
<dbReference type="Pfam" id="PF00005">
    <property type="entry name" value="ABC_tran"/>
    <property type="match status" value="1"/>
</dbReference>
<dbReference type="SMART" id="SM00382">
    <property type="entry name" value="AAA"/>
    <property type="match status" value="1"/>
</dbReference>
<dbReference type="SUPFAM" id="SSF52540">
    <property type="entry name" value="P-loop containing nucleoside triphosphate hydrolases"/>
    <property type="match status" value="1"/>
</dbReference>
<dbReference type="PROSITE" id="PS50893">
    <property type="entry name" value="ABC_TRANSPORTER_2"/>
    <property type="match status" value="1"/>
</dbReference>
<dbReference type="PROSITE" id="PS51243">
    <property type="entry name" value="CCMA"/>
    <property type="match status" value="1"/>
</dbReference>
<organism>
    <name type="scientific">Bartonella henselae (strain ATCC 49882 / DSM 28221 / CCUG 30454 / Houston 1)</name>
    <name type="common">Rochalimaea henselae</name>
    <dbReference type="NCBI Taxonomy" id="283166"/>
    <lineage>
        <taxon>Bacteria</taxon>
        <taxon>Pseudomonadati</taxon>
        <taxon>Pseudomonadota</taxon>
        <taxon>Alphaproteobacteria</taxon>
        <taxon>Hyphomicrobiales</taxon>
        <taxon>Bartonellaceae</taxon>
        <taxon>Bartonella</taxon>
    </lineage>
</organism>
<evidence type="ECO:0000255" key="1">
    <source>
        <dbReference type="HAMAP-Rule" id="MF_01707"/>
    </source>
</evidence>
<keyword id="KW-0067">ATP-binding</keyword>
<keyword id="KW-0997">Cell inner membrane</keyword>
<keyword id="KW-1003">Cell membrane</keyword>
<keyword id="KW-0201">Cytochrome c-type biogenesis</keyword>
<keyword id="KW-0472">Membrane</keyword>
<keyword id="KW-0547">Nucleotide-binding</keyword>
<keyword id="KW-1278">Translocase</keyword>
<keyword id="KW-0813">Transport</keyword>
<sequence length="208" mass="23164">MVLSGKDLTAYRNEDVLFQGLSFCLFPQQLMTITGPNGIGKSTLLRIIAGLFKAAEGHVSLKDQEQIYPVATACHYLGPQNAMKPFLSVIDNLQFWSAFYGQPLHSPHEVLADIGLSDLEHVPFNVLSTGQKRRIAIARLLLSYRPVWILDEPISGIDSYAQTLLTNIFQYHLNQGGMIIAATHSPLGIPENHKITLEKFLPPQEKIQ</sequence>
<accession>Q6G529</accession>
<reference key="1">
    <citation type="journal article" date="2004" name="Proc. Natl. Acad. Sci. U.S.A.">
        <title>The louse-borne human pathogen Bartonella quintana is a genomic derivative of the zoonotic agent Bartonella henselae.</title>
        <authorList>
            <person name="Alsmark U.C.M."/>
            <person name="Frank A.C."/>
            <person name="Karlberg E.O."/>
            <person name="Legault B.-A."/>
            <person name="Ardell D.H."/>
            <person name="Canbaeck B."/>
            <person name="Eriksson A.-S."/>
            <person name="Naeslund A.K."/>
            <person name="Handley S.A."/>
            <person name="Huvet M."/>
            <person name="La Scola B."/>
            <person name="Holmberg M."/>
            <person name="Andersson S.G.E."/>
        </authorList>
    </citation>
    <scope>NUCLEOTIDE SEQUENCE [LARGE SCALE GENOMIC DNA]</scope>
    <source>
        <strain>ATCC 49882 / DSM 28221 / CCUG 30454 / Houston 1</strain>
    </source>
</reference>
<feature type="chain" id="PRO_0000092169" description="Cytochrome c biogenesis ATP-binding export protein CcmA">
    <location>
        <begin position="1"/>
        <end position="208"/>
    </location>
</feature>
<feature type="domain" description="ABC transporter" evidence="1">
    <location>
        <begin position="3"/>
        <end position="206"/>
    </location>
</feature>
<feature type="binding site" evidence="1">
    <location>
        <begin position="35"/>
        <end position="42"/>
    </location>
    <ligand>
        <name>ATP</name>
        <dbReference type="ChEBI" id="CHEBI:30616"/>
    </ligand>
</feature>
<protein>
    <recommendedName>
        <fullName evidence="1">Cytochrome c biogenesis ATP-binding export protein CcmA</fullName>
        <ecNumber evidence="1">7.6.2.5</ecNumber>
    </recommendedName>
    <alternativeName>
        <fullName evidence="1">Heme exporter protein A</fullName>
    </alternativeName>
</protein>